<dbReference type="EMBL" id="AK002224">
    <property type="protein sequence ID" value="BAE43146.1"/>
    <property type="molecule type" value="mRNA"/>
</dbReference>
<dbReference type="EMBL" id="AK002453">
    <property type="protein sequence ID" value="BAC24992.1"/>
    <property type="molecule type" value="mRNA"/>
</dbReference>
<dbReference type="EMBL" id="AK003569">
    <property type="protein sequence ID" value="BAC25041.1"/>
    <property type="molecule type" value="mRNA"/>
</dbReference>
<dbReference type="EMBL" id="AK005413">
    <property type="protein sequence ID" value="BAC25115.1"/>
    <property type="molecule type" value="mRNA"/>
</dbReference>
<dbReference type="EMBL" id="AK010297">
    <property type="protein sequence ID" value="BAC25288.1"/>
    <property type="molecule type" value="mRNA"/>
</dbReference>
<dbReference type="EMBL" id="AK019285">
    <property type="protein sequence ID" value="BAC25588.1"/>
    <property type="molecule type" value="mRNA"/>
</dbReference>
<dbReference type="EMBL" id="BC002177">
    <property type="protein sequence ID" value="AAH02177.1"/>
    <property type="molecule type" value="mRNA"/>
</dbReference>
<dbReference type="EMBL" id="BC082316">
    <property type="protein sequence ID" value="AAH82316.1"/>
    <property type="molecule type" value="mRNA"/>
</dbReference>
<dbReference type="CCDS" id="CCDS39049.1"/>
<dbReference type="RefSeq" id="NP_001128164.1">
    <property type="nucleotide sequence ID" value="NM_001134692.2"/>
</dbReference>
<dbReference type="RefSeq" id="NP_077780.3">
    <property type="nucleotide sequence ID" value="NM_024460.4"/>
</dbReference>
<dbReference type="RefSeq" id="XP_006504134.1">
    <property type="nucleotide sequence ID" value="XM_006504071.5"/>
</dbReference>
<dbReference type="BMRB" id="Q99LX8"/>
<dbReference type="SMR" id="Q99LX8"/>
<dbReference type="ComplexPortal" id="CPX-5821">
    <property type="entry name" value="Oligosaccharyltransferase complex A"/>
</dbReference>
<dbReference type="ComplexPortal" id="CPX-5822">
    <property type="entry name" value="Oligosaccharyltransferase complex B, MAGT1 variant"/>
</dbReference>
<dbReference type="ComplexPortal" id="CPX-8739">
    <property type="entry name" value="Oligosaccharyltransferase complex B, TUSC3 variant"/>
</dbReference>
<dbReference type="FunCoup" id="Q99LX8">
    <property type="interactions" value="177"/>
</dbReference>
<dbReference type="STRING" id="10090.ENSMUSP00000128352"/>
<dbReference type="PaxDb" id="10090-ENSMUSP00000128352"/>
<dbReference type="TopDownProteomics" id="Q99LX8"/>
<dbReference type="Antibodypedia" id="64138">
    <property type="antibodies" value="13 antibodies from 8 providers"/>
</dbReference>
<dbReference type="Ensembl" id="ENSMUST00000132034.5">
    <property type="protein sequence ID" value="ENSMUSP00000126221.2"/>
    <property type="gene ID" value="ENSMUSG00000038803.8"/>
</dbReference>
<dbReference type="Ensembl" id="ENSMUST00000132253.5">
    <property type="protein sequence ID" value="ENSMUSP00000128352.2"/>
    <property type="gene ID" value="ENSMUSG00000038803.8"/>
</dbReference>
<dbReference type="GeneID" id="67695"/>
<dbReference type="KEGG" id="mmu:67695"/>
<dbReference type="UCSC" id="uc008wwk.2">
    <property type="organism name" value="mouse"/>
</dbReference>
<dbReference type="AGR" id="MGI:1914945"/>
<dbReference type="CTD" id="100128731"/>
<dbReference type="MGI" id="MGI:1914945">
    <property type="gene designation" value="Ost4"/>
</dbReference>
<dbReference type="VEuPathDB" id="HostDB:ENSMUSG00000038803"/>
<dbReference type="eggNOG" id="ENOG502SDSY">
    <property type="taxonomic scope" value="Eukaryota"/>
</dbReference>
<dbReference type="GeneTree" id="ENSGT00390000016516"/>
<dbReference type="HOGENOM" id="CLU_186352_2_0_1"/>
<dbReference type="InParanoid" id="Q99LX8"/>
<dbReference type="OrthoDB" id="2124077at2759"/>
<dbReference type="PhylomeDB" id="Q99LX8"/>
<dbReference type="UniPathway" id="UPA00378"/>
<dbReference type="BioGRID-ORCS" id="67695">
    <property type="hits" value="13 hits in 71 CRISPR screens"/>
</dbReference>
<dbReference type="ChiTaRS" id="Ost4">
    <property type="organism name" value="mouse"/>
</dbReference>
<dbReference type="PRO" id="PR:Q99LX8"/>
<dbReference type="Proteomes" id="UP000000589">
    <property type="component" value="Chromosome 5"/>
</dbReference>
<dbReference type="Bgee" id="ENSMUSG00000038803">
    <property type="expression patterns" value="Expressed in undifferentiated genital tubercle and 246 other cell types or tissues"/>
</dbReference>
<dbReference type="GO" id="GO:0005789">
    <property type="term" value="C:endoplasmic reticulum membrane"/>
    <property type="evidence" value="ECO:0000303"/>
    <property type="project" value="ComplexPortal"/>
</dbReference>
<dbReference type="GO" id="GO:0008250">
    <property type="term" value="C:oligosaccharyltransferase complex"/>
    <property type="evidence" value="ECO:0000303"/>
    <property type="project" value="ComplexPortal"/>
</dbReference>
<dbReference type="GO" id="GO:0160226">
    <property type="term" value="C:oligosaccharyltransferase complex A"/>
    <property type="evidence" value="ECO:0007669"/>
    <property type="project" value="Ensembl"/>
</dbReference>
<dbReference type="GO" id="GO:0160227">
    <property type="term" value="C:oligosaccharyltransferase complex B"/>
    <property type="evidence" value="ECO:0007669"/>
    <property type="project" value="Ensembl"/>
</dbReference>
<dbReference type="GO" id="GO:0006487">
    <property type="term" value="P:protein N-linked glycosylation"/>
    <property type="evidence" value="ECO:0000303"/>
    <property type="project" value="ComplexPortal"/>
</dbReference>
<dbReference type="GO" id="GO:0018279">
    <property type="term" value="P:protein N-linked glycosylation via asparagine"/>
    <property type="evidence" value="ECO:0007669"/>
    <property type="project" value="Ensembl"/>
</dbReference>
<dbReference type="InterPro" id="IPR018943">
    <property type="entry name" value="Oligosaccaryltransferase"/>
</dbReference>
<dbReference type="InterPro" id="IPR051307">
    <property type="entry name" value="OST4"/>
</dbReference>
<dbReference type="InterPro" id="IPR036330">
    <property type="entry name" value="Ost4p_sf"/>
</dbReference>
<dbReference type="PANTHER" id="PTHR48164">
    <property type="entry name" value="DOLICHYL-DIPHOSPHOOLIGOSACCHARIDE--PROTEIN GLYCOSYLTRANSFERASE SUBUNIT 4"/>
    <property type="match status" value="1"/>
</dbReference>
<dbReference type="PANTHER" id="PTHR48164:SF1">
    <property type="entry name" value="DOLICHYL-DIPHOSPHOOLIGOSACCHARIDE--PROTEIN GLYCOSYLTRANSFERASE SUBUNIT 4"/>
    <property type="match status" value="1"/>
</dbReference>
<dbReference type="Pfam" id="PF10215">
    <property type="entry name" value="Ost4"/>
    <property type="match status" value="1"/>
</dbReference>
<dbReference type="SUPFAM" id="SSF103464">
    <property type="entry name" value="Oligosaccharyltransferase subunit ost4p"/>
    <property type="match status" value="1"/>
</dbReference>
<reference key="1">
    <citation type="journal article" date="2005" name="Science">
        <title>The transcriptional landscape of the mammalian genome.</title>
        <authorList>
            <person name="Carninci P."/>
            <person name="Kasukawa T."/>
            <person name="Katayama S."/>
            <person name="Gough J."/>
            <person name="Frith M.C."/>
            <person name="Maeda N."/>
            <person name="Oyama R."/>
            <person name="Ravasi T."/>
            <person name="Lenhard B."/>
            <person name="Wells C."/>
            <person name="Kodzius R."/>
            <person name="Shimokawa K."/>
            <person name="Bajic V.B."/>
            <person name="Brenner S.E."/>
            <person name="Batalov S."/>
            <person name="Forrest A.R."/>
            <person name="Zavolan M."/>
            <person name="Davis M.J."/>
            <person name="Wilming L.G."/>
            <person name="Aidinis V."/>
            <person name="Allen J.E."/>
            <person name="Ambesi-Impiombato A."/>
            <person name="Apweiler R."/>
            <person name="Aturaliya R.N."/>
            <person name="Bailey T.L."/>
            <person name="Bansal M."/>
            <person name="Baxter L."/>
            <person name="Beisel K.W."/>
            <person name="Bersano T."/>
            <person name="Bono H."/>
            <person name="Chalk A.M."/>
            <person name="Chiu K.P."/>
            <person name="Choudhary V."/>
            <person name="Christoffels A."/>
            <person name="Clutterbuck D.R."/>
            <person name="Crowe M.L."/>
            <person name="Dalla E."/>
            <person name="Dalrymple B.P."/>
            <person name="de Bono B."/>
            <person name="Della Gatta G."/>
            <person name="di Bernardo D."/>
            <person name="Down T."/>
            <person name="Engstrom P."/>
            <person name="Fagiolini M."/>
            <person name="Faulkner G."/>
            <person name="Fletcher C.F."/>
            <person name="Fukushima T."/>
            <person name="Furuno M."/>
            <person name="Futaki S."/>
            <person name="Gariboldi M."/>
            <person name="Georgii-Hemming P."/>
            <person name="Gingeras T.R."/>
            <person name="Gojobori T."/>
            <person name="Green R.E."/>
            <person name="Gustincich S."/>
            <person name="Harbers M."/>
            <person name="Hayashi Y."/>
            <person name="Hensch T.K."/>
            <person name="Hirokawa N."/>
            <person name="Hill D."/>
            <person name="Huminiecki L."/>
            <person name="Iacono M."/>
            <person name="Ikeo K."/>
            <person name="Iwama A."/>
            <person name="Ishikawa T."/>
            <person name="Jakt M."/>
            <person name="Kanapin A."/>
            <person name="Katoh M."/>
            <person name="Kawasawa Y."/>
            <person name="Kelso J."/>
            <person name="Kitamura H."/>
            <person name="Kitano H."/>
            <person name="Kollias G."/>
            <person name="Krishnan S.P."/>
            <person name="Kruger A."/>
            <person name="Kummerfeld S.K."/>
            <person name="Kurochkin I.V."/>
            <person name="Lareau L.F."/>
            <person name="Lazarevic D."/>
            <person name="Lipovich L."/>
            <person name="Liu J."/>
            <person name="Liuni S."/>
            <person name="McWilliam S."/>
            <person name="Madan Babu M."/>
            <person name="Madera M."/>
            <person name="Marchionni L."/>
            <person name="Matsuda H."/>
            <person name="Matsuzawa S."/>
            <person name="Miki H."/>
            <person name="Mignone F."/>
            <person name="Miyake S."/>
            <person name="Morris K."/>
            <person name="Mottagui-Tabar S."/>
            <person name="Mulder N."/>
            <person name="Nakano N."/>
            <person name="Nakauchi H."/>
            <person name="Ng P."/>
            <person name="Nilsson R."/>
            <person name="Nishiguchi S."/>
            <person name="Nishikawa S."/>
            <person name="Nori F."/>
            <person name="Ohara O."/>
            <person name="Okazaki Y."/>
            <person name="Orlando V."/>
            <person name="Pang K.C."/>
            <person name="Pavan W.J."/>
            <person name="Pavesi G."/>
            <person name="Pesole G."/>
            <person name="Petrovsky N."/>
            <person name="Piazza S."/>
            <person name="Reed J."/>
            <person name="Reid J.F."/>
            <person name="Ring B.Z."/>
            <person name="Ringwald M."/>
            <person name="Rost B."/>
            <person name="Ruan Y."/>
            <person name="Salzberg S.L."/>
            <person name="Sandelin A."/>
            <person name="Schneider C."/>
            <person name="Schoenbach C."/>
            <person name="Sekiguchi K."/>
            <person name="Semple C.A."/>
            <person name="Seno S."/>
            <person name="Sessa L."/>
            <person name="Sheng Y."/>
            <person name="Shibata Y."/>
            <person name="Shimada H."/>
            <person name="Shimada K."/>
            <person name="Silva D."/>
            <person name="Sinclair B."/>
            <person name="Sperling S."/>
            <person name="Stupka E."/>
            <person name="Sugiura K."/>
            <person name="Sultana R."/>
            <person name="Takenaka Y."/>
            <person name="Taki K."/>
            <person name="Tammoja K."/>
            <person name="Tan S.L."/>
            <person name="Tang S."/>
            <person name="Taylor M.S."/>
            <person name="Tegner J."/>
            <person name="Teichmann S.A."/>
            <person name="Ueda H.R."/>
            <person name="van Nimwegen E."/>
            <person name="Verardo R."/>
            <person name="Wei C.L."/>
            <person name="Yagi K."/>
            <person name="Yamanishi H."/>
            <person name="Zabarovsky E."/>
            <person name="Zhu S."/>
            <person name="Zimmer A."/>
            <person name="Hide W."/>
            <person name="Bult C."/>
            <person name="Grimmond S.M."/>
            <person name="Teasdale R.D."/>
            <person name="Liu E.T."/>
            <person name="Brusic V."/>
            <person name="Quackenbush J."/>
            <person name="Wahlestedt C."/>
            <person name="Mattick J.S."/>
            <person name="Hume D.A."/>
            <person name="Kai C."/>
            <person name="Sasaki D."/>
            <person name="Tomaru Y."/>
            <person name="Fukuda S."/>
            <person name="Kanamori-Katayama M."/>
            <person name="Suzuki M."/>
            <person name="Aoki J."/>
            <person name="Arakawa T."/>
            <person name="Iida J."/>
            <person name="Imamura K."/>
            <person name="Itoh M."/>
            <person name="Kato T."/>
            <person name="Kawaji H."/>
            <person name="Kawagashira N."/>
            <person name="Kawashima T."/>
            <person name="Kojima M."/>
            <person name="Kondo S."/>
            <person name="Konno H."/>
            <person name="Nakano K."/>
            <person name="Ninomiya N."/>
            <person name="Nishio T."/>
            <person name="Okada M."/>
            <person name="Plessy C."/>
            <person name="Shibata K."/>
            <person name="Shiraki T."/>
            <person name="Suzuki S."/>
            <person name="Tagami M."/>
            <person name="Waki K."/>
            <person name="Watahiki A."/>
            <person name="Okamura-Oho Y."/>
            <person name="Suzuki H."/>
            <person name="Kawai J."/>
            <person name="Hayashizaki Y."/>
        </authorList>
    </citation>
    <scope>NUCLEOTIDE SEQUENCE [LARGE SCALE MRNA]</scope>
    <source>
        <strain>C57BL/6J</strain>
        <tissue>Kidney</tissue>
        <tissue>Placenta</tissue>
    </source>
</reference>
<reference key="2">
    <citation type="journal article" date="2004" name="Genome Res.">
        <title>The status, quality, and expansion of the NIH full-length cDNA project: the Mammalian Gene Collection (MGC).</title>
        <authorList>
            <consortium name="The MGC Project Team"/>
        </authorList>
    </citation>
    <scope>NUCLEOTIDE SEQUENCE [LARGE SCALE MRNA]</scope>
    <source>
        <strain>C57BL/6J</strain>
        <strain>FVB/N</strain>
        <tissue>Brain</tissue>
        <tissue>Mammary tumor</tissue>
    </source>
</reference>
<comment type="function">
    <text evidence="1">Subunit of the oligosaccharyl transferase (OST) complex that catalyzes the initial transfer of a defined glycan (Glc(3)Man(9)GlcNAc(2) in eukaryotes) from the lipid carrier dolichol-pyrophosphate to an asparagine residue within an Asn-X-Ser/Thr consensus motif in nascent polypeptide chains, the first step in protein N-glycosylation. N-glycosylation occurs cotranslationally and the complex associates with the Sec61 complex at the channel-forming translocon complex that mediates protein translocation across the endoplasmic reticulum (ER). All subunits are required for a maximal enzyme activity. Specifically involved in maintaining stability of STT3A-containing OST complexes.</text>
</comment>
<comment type="pathway">
    <text evidence="1">Protein modification; protein glycosylation.</text>
</comment>
<comment type="subunit">
    <text evidence="1 2">Component of the oligosaccharyltransferase (OST) complex (By similarity). OST exists in two different complex forms which contain common core subunits RPN1, RPN2, OST48, OST4, DAD1 and TMEM258, either STT3A or STT3B as catalytic subunits, and form-specific accessory subunits (By similarity). STT3A complex assembly occurs through the formation of 3 subcomplexes. Subcomplex 1 contains RPN1 and TMEM258, subcomplex 2 contains the STT3A-specific subunits STT3A, DC2/OSTC, and KCP2 as well as the core subunit OST4, and subcomplex 3 contains RPN2, DAD1, and OST48. The STT3A complex can form stable complexes with the Sec61 complex or with both the Sec61 and TRAP complexes (By similarity).</text>
</comment>
<comment type="subcellular location">
    <subcellularLocation>
        <location evidence="1">Endoplasmic reticulum</location>
    </subcellularLocation>
    <subcellularLocation>
        <location>Endoplasmic reticulum membrane</location>
        <topology evidence="4">Single-pass type III membrane protein</topology>
    </subcellularLocation>
</comment>
<comment type="similarity">
    <text evidence="4">Belongs to the OST4 family.</text>
</comment>
<keyword id="KW-0256">Endoplasmic reticulum</keyword>
<keyword id="KW-0472">Membrane</keyword>
<keyword id="KW-1185">Reference proteome</keyword>
<keyword id="KW-0735">Signal-anchor</keyword>
<keyword id="KW-0812">Transmembrane</keyword>
<keyword id="KW-1133">Transmembrane helix</keyword>
<name>OST4_MOUSE</name>
<gene>
    <name evidence="5" type="primary">Ost4</name>
</gene>
<organism>
    <name type="scientific">Mus musculus</name>
    <name type="common">Mouse</name>
    <dbReference type="NCBI Taxonomy" id="10090"/>
    <lineage>
        <taxon>Eukaryota</taxon>
        <taxon>Metazoa</taxon>
        <taxon>Chordata</taxon>
        <taxon>Craniata</taxon>
        <taxon>Vertebrata</taxon>
        <taxon>Euteleostomi</taxon>
        <taxon>Mammalia</taxon>
        <taxon>Eutheria</taxon>
        <taxon>Euarchontoglires</taxon>
        <taxon>Glires</taxon>
        <taxon>Rodentia</taxon>
        <taxon>Myomorpha</taxon>
        <taxon>Muroidea</taxon>
        <taxon>Muridae</taxon>
        <taxon>Murinae</taxon>
        <taxon>Mus</taxon>
        <taxon>Mus</taxon>
    </lineage>
</organism>
<feature type="chain" id="PRO_0000328639" description="Dolichyl-diphosphooligosaccharide--protein glycosyltransferase subunit 4">
    <location>
        <begin position="1"/>
        <end position="37"/>
    </location>
</feature>
<feature type="topological domain" description="Lumenal" evidence="3">
    <location>
        <begin position="1"/>
        <end position="4"/>
    </location>
</feature>
<feature type="transmembrane region" description="Helical" evidence="3">
    <location>
        <begin position="5"/>
        <end position="25"/>
    </location>
</feature>
<feature type="topological domain" description="Cytoplasmic" evidence="3">
    <location>
        <begin position="26"/>
        <end position="37"/>
    </location>
</feature>
<proteinExistence type="inferred from homology"/>
<evidence type="ECO:0000250" key="1">
    <source>
        <dbReference type="UniProtKB" id="P0C6T2"/>
    </source>
</evidence>
<evidence type="ECO:0000250" key="2">
    <source>
        <dbReference type="UniProtKB" id="P0CU66"/>
    </source>
</evidence>
<evidence type="ECO:0000255" key="3"/>
<evidence type="ECO:0000305" key="4"/>
<evidence type="ECO:0000312" key="5">
    <source>
        <dbReference type="MGI" id="MGI:1914945"/>
    </source>
</evidence>
<protein>
    <recommendedName>
        <fullName evidence="4">Dolichyl-diphosphooligosaccharide--protein glycosyltransferase subunit 4</fullName>
    </recommendedName>
</protein>
<accession>Q99LX8</accession>
<sequence>MITDVQLAIFANMLGVSLFLLVVLYHYVAVNNPKKQE</sequence>